<name>OAF3_ZYGRC</name>
<feature type="chain" id="PRO_0000409046" description="Oleate activated transcription factor 3">
    <location>
        <begin position="1"/>
        <end position="842"/>
    </location>
</feature>
<feature type="DNA-binding region" description="Zn(2)-C6 fungal-type" evidence="2">
    <location>
        <begin position="22"/>
        <end position="50"/>
    </location>
</feature>
<feature type="region of interest" description="Disordered" evidence="3">
    <location>
        <begin position="55"/>
        <end position="101"/>
    </location>
</feature>
<feature type="compositionally biased region" description="Basic and acidic residues" evidence="3">
    <location>
        <begin position="60"/>
        <end position="71"/>
    </location>
</feature>
<feature type="compositionally biased region" description="Low complexity" evidence="3">
    <location>
        <begin position="87"/>
        <end position="99"/>
    </location>
</feature>
<accession>C5DUX2</accession>
<keyword id="KW-0963">Cytoplasm</keyword>
<keyword id="KW-0238">DNA-binding</keyword>
<keyword id="KW-0479">Metal-binding</keyword>
<keyword id="KW-0496">Mitochondrion</keyword>
<keyword id="KW-0539">Nucleus</keyword>
<keyword id="KW-1185">Reference proteome</keyword>
<keyword id="KW-0678">Repressor</keyword>
<keyword id="KW-0804">Transcription</keyword>
<keyword id="KW-0805">Transcription regulation</keyword>
<keyword id="KW-0862">Zinc</keyword>
<dbReference type="EMBL" id="CU928176">
    <property type="protein sequence ID" value="CAR27591.1"/>
    <property type="molecule type" value="Genomic_DNA"/>
</dbReference>
<dbReference type="RefSeq" id="XP_002496524.1">
    <property type="nucleotide sequence ID" value="XM_002496479.1"/>
</dbReference>
<dbReference type="SMR" id="C5DUX2"/>
<dbReference type="FunCoup" id="C5DUX2">
    <property type="interactions" value="221"/>
</dbReference>
<dbReference type="STRING" id="559307.C5DUX2"/>
<dbReference type="GeneID" id="8203772"/>
<dbReference type="KEGG" id="zro:ZYRO0D02090g"/>
<dbReference type="HOGENOM" id="CLU_018684_0_0_1"/>
<dbReference type="InParanoid" id="C5DUX2"/>
<dbReference type="Proteomes" id="UP000008536">
    <property type="component" value="Chromosome D"/>
</dbReference>
<dbReference type="GO" id="GO:0005739">
    <property type="term" value="C:mitochondrion"/>
    <property type="evidence" value="ECO:0007669"/>
    <property type="project" value="UniProtKB-SubCell"/>
</dbReference>
<dbReference type="GO" id="GO:0005634">
    <property type="term" value="C:nucleus"/>
    <property type="evidence" value="ECO:0007669"/>
    <property type="project" value="UniProtKB-SubCell"/>
</dbReference>
<dbReference type="GO" id="GO:0000981">
    <property type="term" value="F:DNA-binding transcription factor activity, RNA polymerase II-specific"/>
    <property type="evidence" value="ECO:0007669"/>
    <property type="project" value="InterPro"/>
</dbReference>
<dbReference type="GO" id="GO:0000978">
    <property type="term" value="F:RNA polymerase II cis-regulatory region sequence-specific DNA binding"/>
    <property type="evidence" value="ECO:0007669"/>
    <property type="project" value="TreeGrafter"/>
</dbReference>
<dbReference type="GO" id="GO:0008270">
    <property type="term" value="F:zinc ion binding"/>
    <property type="evidence" value="ECO:0007669"/>
    <property type="project" value="InterPro"/>
</dbReference>
<dbReference type="GO" id="GO:0045944">
    <property type="term" value="P:positive regulation of transcription by RNA polymerase II"/>
    <property type="evidence" value="ECO:0007669"/>
    <property type="project" value="TreeGrafter"/>
</dbReference>
<dbReference type="CDD" id="cd00067">
    <property type="entry name" value="GAL4"/>
    <property type="match status" value="1"/>
</dbReference>
<dbReference type="Gene3D" id="4.10.240.10">
    <property type="entry name" value="Zn(2)-C6 fungal-type DNA-binding domain"/>
    <property type="match status" value="1"/>
</dbReference>
<dbReference type="InterPro" id="IPR050675">
    <property type="entry name" value="OAF3"/>
</dbReference>
<dbReference type="InterPro" id="IPR036864">
    <property type="entry name" value="Zn2-C6_fun-type_DNA-bd_sf"/>
</dbReference>
<dbReference type="InterPro" id="IPR001138">
    <property type="entry name" value="Zn2Cys6_DnaBD"/>
</dbReference>
<dbReference type="PANTHER" id="PTHR31069:SF33">
    <property type="entry name" value="OLEATE ACTIVATED TRANSCRIPTION FACTOR 3"/>
    <property type="match status" value="1"/>
</dbReference>
<dbReference type="PANTHER" id="PTHR31069">
    <property type="entry name" value="OLEATE-ACTIVATED TRANSCRIPTION FACTOR 1-RELATED"/>
    <property type="match status" value="1"/>
</dbReference>
<dbReference type="Pfam" id="PF00172">
    <property type="entry name" value="Zn_clus"/>
    <property type="match status" value="1"/>
</dbReference>
<dbReference type="SMART" id="SM00066">
    <property type="entry name" value="GAL4"/>
    <property type="match status" value="1"/>
</dbReference>
<dbReference type="SUPFAM" id="SSF57701">
    <property type="entry name" value="Zn2/Cys6 DNA-binding domain"/>
    <property type="match status" value="1"/>
</dbReference>
<dbReference type="PROSITE" id="PS00463">
    <property type="entry name" value="ZN2_CY6_FUNGAL_1"/>
    <property type="match status" value="1"/>
</dbReference>
<dbReference type="PROSITE" id="PS50048">
    <property type="entry name" value="ZN2_CY6_FUNGAL_2"/>
    <property type="match status" value="1"/>
</dbReference>
<protein>
    <recommendedName>
        <fullName>Oleate activated transcription factor 3</fullName>
    </recommendedName>
</protein>
<evidence type="ECO:0000250" key="1"/>
<evidence type="ECO:0000255" key="2">
    <source>
        <dbReference type="PROSITE-ProRule" id="PRU00227"/>
    </source>
</evidence>
<evidence type="ECO:0000256" key="3">
    <source>
        <dbReference type="SAM" id="MobiDB-lite"/>
    </source>
</evidence>
<evidence type="ECO:0000305" key="4"/>
<organism>
    <name type="scientific">Zygosaccharomyces rouxii (strain ATCC 2623 / CBS 732 / NBRC 1130 / NCYC 568 / NRRL Y-229)</name>
    <dbReference type="NCBI Taxonomy" id="559307"/>
    <lineage>
        <taxon>Eukaryota</taxon>
        <taxon>Fungi</taxon>
        <taxon>Dikarya</taxon>
        <taxon>Ascomycota</taxon>
        <taxon>Saccharomycotina</taxon>
        <taxon>Saccharomycetes</taxon>
        <taxon>Saccharomycetales</taxon>
        <taxon>Saccharomycetaceae</taxon>
        <taxon>Zygosaccharomyces</taxon>
    </lineage>
</organism>
<reference key="1">
    <citation type="journal article" date="2009" name="Genome Res.">
        <title>Comparative genomics of protoploid Saccharomycetaceae.</title>
        <authorList>
            <consortium name="The Genolevures Consortium"/>
            <person name="Souciet J.-L."/>
            <person name="Dujon B."/>
            <person name="Gaillardin C."/>
            <person name="Johnston M."/>
            <person name="Baret P.V."/>
            <person name="Cliften P."/>
            <person name="Sherman D.J."/>
            <person name="Weissenbach J."/>
            <person name="Westhof E."/>
            <person name="Wincker P."/>
            <person name="Jubin C."/>
            <person name="Poulain J."/>
            <person name="Barbe V."/>
            <person name="Segurens B."/>
            <person name="Artiguenave F."/>
            <person name="Anthouard V."/>
            <person name="Vacherie B."/>
            <person name="Val M.-E."/>
            <person name="Fulton R.S."/>
            <person name="Minx P."/>
            <person name="Wilson R."/>
            <person name="Durrens P."/>
            <person name="Jean G."/>
            <person name="Marck C."/>
            <person name="Martin T."/>
            <person name="Nikolski M."/>
            <person name="Rolland T."/>
            <person name="Seret M.-L."/>
            <person name="Casaregola S."/>
            <person name="Despons L."/>
            <person name="Fairhead C."/>
            <person name="Fischer G."/>
            <person name="Lafontaine I."/>
            <person name="Leh V."/>
            <person name="Lemaire M."/>
            <person name="de Montigny J."/>
            <person name="Neuveglise C."/>
            <person name="Thierry A."/>
            <person name="Blanc-Lenfle I."/>
            <person name="Bleykasten C."/>
            <person name="Diffels J."/>
            <person name="Fritsch E."/>
            <person name="Frangeul L."/>
            <person name="Goeffon A."/>
            <person name="Jauniaux N."/>
            <person name="Kachouri-Lafond R."/>
            <person name="Payen C."/>
            <person name="Potier S."/>
            <person name="Pribylova L."/>
            <person name="Ozanne C."/>
            <person name="Richard G.-F."/>
            <person name="Sacerdot C."/>
            <person name="Straub M.-L."/>
            <person name="Talla E."/>
        </authorList>
    </citation>
    <scope>NUCLEOTIDE SEQUENCE [LARGE SCALE GENOMIC DNA]</scope>
    <source>
        <strain>ATCC 2623 / CBS 732 / BCRC 21506 / NBRC 1130 / NCYC 568 / NRRL Y-229</strain>
    </source>
</reference>
<comment type="function">
    <text evidence="1">Transcriptional inhibitor with a significantly increased number of target genes in response to oleate.</text>
</comment>
<comment type="subcellular location">
    <subcellularLocation>
        <location evidence="1">Cytoplasm</location>
    </subcellularLocation>
    <subcellularLocation>
        <location evidence="2">Nucleus</location>
    </subcellularLocation>
    <subcellularLocation>
        <location evidence="1">Mitochondrion</location>
    </subcellularLocation>
</comment>
<comment type="similarity">
    <text evidence="4">Belongs to the OAF3 family.</text>
</comment>
<gene>
    <name type="primary">OAF3</name>
    <name type="ordered locus">ZYRO0D02090g</name>
</gene>
<sequence length="842" mass="98212">MVLSQDVRGASVRRRNRPTVVCTNCKRRKSKCDRQNPCSNCVRFGNKDTCHYVQNPKNTESQHGEDTDNKVKKQQPQMIKGKRNGTSSSIVGSKASSISPTGQSLDVPLVLSGKNYVNLSPSGNFVEFKRSAVTMFSYFCKRAIQDRDLYLKALVTFRSIAVEMTTNTLRGTKNYSKNPSLPESFKPLSIFDADGDPLSSDSLFRQHQLIHKSLFDKYGKYRKDEAIKIVDVCELLNDNLPSRSLFIDHILVHFESHVIHMVPIFEMEFLKYDVNNFYDKWEQSREISVKDFDHMVCCVILLITKICILSTKFARLPSELLEHFEKLDTSKYIAIIHYYMFEMKSLRKCTLRQLQILLLLRFYHWCAPEDGDGDSLQHSHILMGTIIASCQEMGISWLCIRDPGIYWFQLFGQSKRVPFILSPEDFKIIYQMIWSYVLHWDRKMFLINGQECLIGKSHLYDVTGQELSWHHRMVALDHIIMKMNDILNDSPSRVDIVALKQEWNNALRIFELIRDTKKEHLHLNFEYETTLELFRLCLSHAELTHLEQVNDVESFHLTVQSLWDQIVKLASKCHRYFYGPQEMDPYSRFFTNKIISVVADKLCTLIPAFVLRLNRFGEMGFDQMNMMVKFLFGVCSMYYNELGFDYYRCFESMFTAKISYKILNRPRNKNPWEIILEFLLCQLEKEGIKDQLRELKIIQNLPVLVSLRESLNLIPEYHRDAVKLWNTDVVPIGHSSVNFTLNLREESLEPFLVDRYSQTFNIFTSFYDHASSQLAEEAEDTSSKIQYNVENSAEQAQEIAETNAVPVEHPLSLEPTNPVNLEESNLELIRNMFEPLDFISFF</sequence>
<proteinExistence type="inferred from homology"/>